<accession>C5G729</accession>
<protein>
    <recommendedName>
        <fullName evidence="1">Protein GET1</fullName>
    </recommendedName>
    <alternativeName>
        <fullName evidence="1">Guided entry of tail-anchored proteins 1</fullName>
    </alternativeName>
</protein>
<sequence length="206" mass="23082">MPSLLITILLLNIVIYVINTIGAATIDSLLWLFYIKLPTGTSHMAREQRRLKREVIQLKREMNATSSQDEFAKWAKLRRRHDKALETYEAKNNELTQCKSSFDMTVKSVRWAATSGLMLFLQFWYSKRPIFTLPPGWIPWQVQWVLSFPRAPMGTVSIQIWGGACATVVALVGDAVGATMGFVSASKKEGMKVGAGVGEKEGKKSQ</sequence>
<organism>
    <name type="scientific">Ajellomyces dermatitidis (strain ER-3 / ATCC MYA-2586)</name>
    <name type="common">Blastomyces dermatitidis</name>
    <dbReference type="NCBI Taxonomy" id="559297"/>
    <lineage>
        <taxon>Eukaryota</taxon>
        <taxon>Fungi</taxon>
        <taxon>Dikarya</taxon>
        <taxon>Ascomycota</taxon>
        <taxon>Pezizomycotina</taxon>
        <taxon>Eurotiomycetes</taxon>
        <taxon>Eurotiomycetidae</taxon>
        <taxon>Onygenales</taxon>
        <taxon>Ajellomycetaceae</taxon>
        <taxon>Blastomyces</taxon>
    </lineage>
</organism>
<name>GET1_AJEDR</name>
<dbReference type="EMBL" id="EQ999973">
    <property type="protein sequence ID" value="EEQ83560.1"/>
    <property type="molecule type" value="Genomic_DNA"/>
</dbReference>
<dbReference type="SMR" id="C5G729"/>
<dbReference type="STRING" id="559297.C5G729"/>
<dbReference type="VEuPathDB" id="FungiDB:BDCG_00365"/>
<dbReference type="eggNOG" id="KOG4253">
    <property type="taxonomic scope" value="Eukaryota"/>
</dbReference>
<dbReference type="HOGENOM" id="CLU_089418_1_0_1"/>
<dbReference type="OMA" id="AEWIISF"/>
<dbReference type="GO" id="GO:0005789">
    <property type="term" value="C:endoplasmic reticulum membrane"/>
    <property type="evidence" value="ECO:0007669"/>
    <property type="project" value="UniProtKB-SubCell"/>
</dbReference>
<dbReference type="GO" id="GO:0043529">
    <property type="term" value="C:GET complex"/>
    <property type="evidence" value="ECO:0007669"/>
    <property type="project" value="InterPro"/>
</dbReference>
<dbReference type="GO" id="GO:0043495">
    <property type="term" value="F:protein-membrane adaptor activity"/>
    <property type="evidence" value="ECO:0007669"/>
    <property type="project" value="TreeGrafter"/>
</dbReference>
<dbReference type="GO" id="GO:0071816">
    <property type="term" value="P:tail-anchored membrane protein insertion into ER membrane"/>
    <property type="evidence" value="ECO:0007669"/>
    <property type="project" value="InterPro"/>
</dbReference>
<dbReference type="FunFam" id="1.10.287.660:FF:000006">
    <property type="entry name" value="Protein GET1"/>
    <property type="match status" value="1"/>
</dbReference>
<dbReference type="Gene3D" id="1.10.287.660">
    <property type="entry name" value="Helix hairpin bin"/>
    <property type="match status" value="1"/>
</dbReference>
<dbReference type="HAMAP" id="MF_03113">
    <property type="entry name" value="Get1"/>
    <property type="match status" value="1"/>
</dbReference>
<dbReference type="InterPro" id="IPR028945">
    <property type="entry name" value="Get1"/>
</dbReference>
<dbReference type="InterPro" id="IPR027538">
    <property type="entry name" value="Get1_fungi"/>
</dbReference>
<dbReference type="InterPro" id="IPR029012">
    <property type="entry name" value="Helix_hairpin_bin_sf"/>
</dbReference>
<dbReference type="PANTHER" id="PTHR42650:SF1">
    <property type="entry name" value="GUIDED ENTRY OF TAIL-ANCHORED PROTEINS FACTOR 1"/>
    <property type="match status" value="1"/>
</dbReference>
<dbReference type="PANTHER" id="PTHR42650">
    <property type="entry name" value="TAIL-ANCHORED PROTEIN INSERTION RECEPTOR WRB"/>
    <property type="match status" value="1"/>
</dbReference>
<dbReference type="Pfam" id="PF04420">
    <property type="entry name" value="CHD5"/>
    <property type="match status" value="1"/>
</dbReference>
<reference key="1">
    <citation type="journal article" date="2015" name="PLoS Genet.">
        <title>The dynamic genome and transcriptome of the human fungal pathogen Blastomyces and close relative Emmonsia.</title>
        <authorList>
            <person name="Munoz J.F."/>
            <person name="Gauthier G.M."/>
            <person name="Desjardins C.A."/>
            <person name="Gallo J.E."/>
            <person name="Holder J."/>
            <person name="Sullivan T.D."/>
            <person name="Marty A.J."/>
            <person name="Carmen J.C."/>
            <person name="Chen Z."/>
            <person name="Ding L."/>
            <person name="Gujja S."/>
            <person name="Magrini V."/>
            <person name="Misas E."/>
            <person name="Mitreva M."/>
            <person name="Priest M."/>
            <person name="Saif S."/>
            <person name="Whiston E.A."/>
            <person name="Young S."/>
            <person name="Zeng Q."/>
            <person name="Goldman W.E."/>
            <person name="Mardis E.R."/>
            <person name="Taylor J.W."/>
            <person name="McEwen J.G."/>
            <person name="Clay O.K."/>
            <person name="Klein B.S."/>
            <person name="Cuomo C.A."/>
        </authorList>
    </citation>
    <scope>NUCLEOTIDE SEQUENCE [LARGE SCALE GENOMIC DNA]</scope>
    <source>
        <strain>ER-3 / ATCC MYA-2586</strain>
    </source>
</reference>
<comment type="function">
    <text evidence="1">Required for the post-translational delivery of tail-anchored (TA) proteins to the endoplasmic reticulum. Acts as a membrane receptor for soluble GET3, which recognizes and selectively binds the transmembrane domain of TA proteins in the cytosol.</text>
</comment>
<comment type="subunit">
    <text evidence="1">Interacts with GET3.</text>
</comment>
<comment type="subcellular location">
    <subcellularLocation>
        <location evidence="1">Endoplasmic reticulum membrane</location>
        <topology evidence="1">Multi-pass membrane protein</topology>
    </subcellularLocation>
</comment>
<comment type="similarity">
    <text evidence="1">Belongs to the WRB/GET1 family.</text>
</comment>
<feature type="chain" id="PRO_0000388572" description="Protein GET1">
    <location>
        <begin position="1"/>
        <end position="206"/>
    </location>
</feature>
<feature type="topological domain" description="Lumenal" evidence="1">
    <location>
        <begin position="1"/>
        <end position="4"/>
    </location>
</feature>
<feature type="transmembrane region" description="Helical" evidence="1">
    <location>
        <begin position="5"/>
        <end position="24"/>
    </location>
</feature>
<feature type="topological domain" description="Cytoplasmic" evidence="1">
    <location>
        <begin position="25"/>
        <end position="110"/>
    </location>
</feature>
<feature type="transmembrane region" description="Helical" evidence="1">
    <location>
        <begin position="111"/>
        <end position="131"/>
    </location>
</feature>
<feature type="topological domain" description="Lumenal" evidence="1">
    <location>
        <begin position="132"/>
        <end position="155"/>
    </location>
</feature>
<feature type="transmembrane region" description="Helical" evidence="1">
    <location>
        <begin position="156"/>
        <end position="172"/>
    </location>
</feature>
<feature type="topological domain" description="Cytoplasmic" evidence="1">
    <location>
        <begin position="173"/>
        <end position="206"/>
    </location>
</feature>
<feature type="coiled-coil region" evidence="1">
    <location>
        <begin position="42"/>
        <end position="99"/>
    </location>
</feature>
<proteinExistence type="inferred from homology"/>
<keyword id="KW-0175">Coiled coil</keyword>
<keyword id="KW-0256">Endoplasmic reticulum</keyword>
<keyword id="KW-0472">Membrane</keyword>
<keyword id="KW-0812">Transmembrane</keyword>
<keyword id="KW-1133">Transmembrane helix</keyword>
<keyword id="KW-0813">Transport</keyword>
<evidence type="ECO:0000255" key="1">
    <source>
        <dbReference type="HAMAP-Rule" id="MF_03113"/>
    </source>
</evidence>
<gene>
    <name evidence="1" type="primary">GET1</name>
    <name type="ORF">BDCG_00365</name>
</gene>